<gene>
    <name evidence="5" type="primary">FCK2</name>
    <name evidence="5" type="ORF">FPSE_20001</name>
</gene>
<evidence type="ECO:0000250" key="1">
    <source>
        <dbReference type="UniProtKB" id="P04798"/>
    </source>
</evidence>
<evidence type="ECO:0000255" key="2"/>
<evidence type="ECO:0000255" key="3">
    <source>
        <dbReference type="PROSITE-ProRule" id="PRU00498"/>
    </source>
</evidence>
<evidence type="ECO:0000269" key="4">
    <source>
    </source>
</evidence>
<evidence type="ECO:0000303" key="5">
    <source>
    </source>
</evidence>
<evidence type="ECO:0000305" key="6"/>
<evidence type="ECO:0000305" key="7">
    <source>
    </source>
</evidence>
<protein>
    <recommendedName>
        <fullName evidence="5">Cytochrome P450 monooxygenase FCK2</fullName>
        <ecNumber evidence="7">1.-.-.-</ecNumber>
    </recommendedName>
    <alternativeName>
        <fullName evidence="5">Cytokinin biosynthesis protein 2</fullName>
    </alternativeName>
</protein>
<accession>P0DPA4</accession>
<comment type="function">
    <text>Cytochrome P450 monooxygenase; part of the gene cluster that mediates the biosynthesis of cytokinins such as fusatin, fusatinic acids or 8-oxofusatin, known for their growth promoting and anti-senescence activities toward host plants (PubMed:28802024). FCK1 is a bifunctional enzyme that performs the first steps in the biosynthesis of Fusarium cytokinins (PubMed:28802024). It first condenses adenosine monophosphate (AMP) with dimethylallyl diphosphate (DMAPP) to yield isoprenyl adenosine monophosphate (PubMed:28802024). It then catalyzes the removal of the phosphoribose to produce isopentenylaldehyde (PubMed:28802024). The cytochrome P450 monooxygenase then converts isopentenylaldehyde to trans-zeatin (PubMed:28802024). A condensation step converts trans-zeatin to fusatin which is further modified to produce fusatinic acid (PubMed:28802024). The mechanism for oxidation of fusatin to fusatinic acid remains unknown (PubMed:28802024). 8-oxofusatin could be produced through several pathways, via direct oxygenation of fusatin, or via the 8-oxo-pentenyladenine intermediate which itself must arise from either the prenylation of 8-oxo-AMP by FCK1 and/or oxygenation of isopentenylaldehyde (PubMed:28802024). Both the FCK3 and FCK4 enzymes act downstream of the identified cytokinins to produce yet unidentified compounds (PubMed:28802024).</text>
</comment>
<comment type="cofactor">
    <cofactor evidence="1">
        <name>heme</name>
        <dbReference type="ChEBI" id="CHEBI:30413"/>
    </cofactor>
</comment>
<comment type="pathway">
    <text evidence="4">Secondary metabolite biosynthesis.</text>
</comment>
<comment type="subcellular location">
    <subcellularLocation>
        <location evidence="2">Membrane</location>
        <topology evidence="2">Multi-pass membrane protein</topology>
    </subcellularLocation>
</comment>
<comment type="induction">
    <text evidence="4">Expressed during infection of barley and Brachypodium (PubMed:28802024).</text>
</comment>
<comment type="disruption phenotype">
    <text evidence="4">Results in the production of only two cytokinins, isopentenylaldehyde and 8-oxo-isopentenyladenine (PubMed:28802024).</text>
</comment>
<comment type="similarity">
    <text evidence="6">Belongs to the cytochrome P450 family.</text>
</comment>
<name>FCK2_FUSPC</name>
<organism>
    <name type="scientific">Fusarium pseudograminearum (strain CS3096)</name>
    <name type="common">Wheat and barley crown-rot fungus</name>
    <dbReference type="NCBI Taxonomy" id="1028729"/>
    <lineage>
        <taxon>Eukaryota</taxon>
        <taxon>Fungi</taxon>
        <taxon>Dikarya</taxon>
        <taxon>Ascomycota</taxon>
        <taxon>Pezizomycotina</taxon>
        <taxon>Sordariomycetes</taxon>
        <taxon>Hypocreomycetidae</taxon>
        <taxon>Hypocreales</taxon>
        <taxon>Nectriaceae</taxon>
        <taxon>Fusarium</taxon>
    </lineage>
</organism>
<dbReference type="EC" id="1.-.-.-" evidence="7"/>
<dbReference type="EMBL" id="AFNW01000149">
    <property type="status" value="NOT_ANNOTATED_CDS"/>
    <property type="molecule type" value="Genomic_DNA"/>
</dbReference>
<dbReference type="SMR" id="P0DPA4"/>
<dbReference type="GlyCosmos" id="P0DPA4">
    <property type="glycosylation" value="1 site, No reported glycans"/>
</dbReference>
<dbReference type="Proteomes" id="UP000007978">
    <property type="component" value="Chromosome 3"/>
</dbReference>
<dbReference type="GO" id="GO:0016020">
    <property type="term" value="C:membrane"/>
    <property type="evidence" value="ECO:0007669"/>
    <property type="project" value="UniProtKB-SubCell"/>
</dbReference>
<dbReference type="GO" id="GO:0020037">
    <property type="term" value="F:heme binding"/>
    <property type="evidence" value="ECO:0007669"/>
    <property type="project" value="InterPro"/>
</dbReference>
<dbReference type="GO" id="GO:0005506">
    <property type="term" value="F:iron ion binding"/>
    <property type="evidence" value="ECO:0007669"/>
    <property type="project" value="InterPro"/>
</dbReference>
<dbReference type="GO" id="GO:0004497">
    <property type="term" value="F:monooxygenase activity"/>
    <property type="evidence" value="ECO:0007669"/>
    <property type="project" value="UniProtKB-KW"/>
</dbReference>
<dbReference type="GO" id="GO:0016705">
    <property type="term" value="F:oxidoreductase activity, acting on paired donors, with incorporation or reduction of molecular oxygen"/>
    <property type="evidence" value="ECO:0007669"/>
    <property type="project" value="InterPro"/>
</dbReference>
<dbReference type="CDD" id="cd11061">
    <property type="entry name" value="CYP67-like"/>
    <property type="match status" value="1"/>
</dbReference>
<dbReference type="FunFam" id="1.10.630.10:FF:000063">
    <property type="entry name" value="Cytochrome P450 monooxygenase"/>
    <property type="match status" value="1"/>
</dbReference>
<dbReference type="Gene3D" id="1.10.630.10">
    <property type="entry name" value="Cytochrome P450"/>
    <property type="match status" value="1"/>
</dbReference>
<dbReference type="InterPro" id="IPR001128">
    <property type="entry name" value="Cyt_P450"/>
</dbReference>
<dbReference type="InterPro" id="IPR002401">
    <property type="entry name" value="Cyt_P450_E_grp-I"/>
</dbReference>
<dbReference type="InterPro" id="IPR036396">
    <property type="entry name" value="Cyt_P450_sf"/>
</dbReference>
<dbReference type="InterPro" id="IPR050121">
    <property type="entry name" value="Cytochrome_P450_monoxygenase"/>
</dbReference>
<dbReference type="PANTHER" id="PTHR24305">
    <property type="entry name" value="CYTOCHROME P450"/>
    <property type="match status" value="1"/>
</dbReference>
<dbReference type="PANTHER" id="PTHR24305:SF187">
    <property type="entry name" value="P450, PUTATIVE (EUROFUNG)-RELATED"/>
    <property type="match status" value="1"/>
</dbReference>
<dbReference type="Pfam" id="PF00067">
    <property type="entry name" value="p450"/>
    <property type="match status" value="1"/>
</dbReference>
<dbReference type="PRINTS" id="PR00463">
    <property type="entry name" value="EP450I"/>
</dbReference>
<dbReference type="PRINTS" id="PR00385">
    <property type="entry name" value="P450"/>
</dbReference>
<dbReference type="SUPFAM" id="SSF48264">
    <property type="entry name" value="Cytochrome P450"/>
    <property type="match status" value="1"/>
</dbReference>
<sequence>MATLHAYFDPANYSLFFVLGVLTHVFIFRRGEWDLHVFNILQAFAVLESSLVYIVTRAVQAQGLSLWKVTTISSCFTLSTLMGLLISILMYRSWFHRLRRFPGPFCARLSNLYITFRAFKKNRLYEEVQQLHRRYGDIVRIGPNELSIIDPHALRALHSNSSPCTKGPWYSVEHPIKALQMTRDKEEHAYRRKAWDLAFSSKALREYEARVAGYTTQLVDQIEASQSTPIDASLWFNFYSFDVMGDLAFGRTFDMLKNGTAHPFMELVHSNMLTAGSLSHLPWIFPLLKRIPLLNQKTLEFQGWLKQQVDWRQKNNPDLPDVFSWILSDYDALDKPTAQDTINLRGDAQLIAVAGSDTTAASLSCLFSELAVNPETCLNLQRELDQYHAEHDKPDHLSLSKLRYLQACIDESMRLYPAIPSGLQRMTPPEGLDIGNTYLPGDTIVTIPTYTFNRDERLFTHADKFIPERWTTKKELTKDPSNFVPFSIGQYSCVGKQLGLMETRFVASQILVKYNVRLAHEDVARDFVAGLRDGFTLAMPSLSLVFTQRTT</sequence>
<feature type="chain" id="PRO_0000442155" description="Cytochrome P450 monooxygenase FCK2">
    <location>
        <begin position="1"/>
        <end position="551"/>
    </location>
</feature>
<feature type="transmembrane region" description="Helical" evidence="2">
    <location>
        <begin position="8"/>
        <end position="28"/>
    </location>
</feature>
<feature type="transmembrane region" description="Helical" evidence="2">
    <location>
        <begin position="35"/>
        <end position="55"/>
    </location>
</feature>
<feature type="transmembrane region" description="Helical" evidence="2">
    <location>
        <begin position="69"/>
        <end position="89"/>
    </location>
</feature>
<feature type="binding site" description="axial binding residue" evidence="1">
    <location>
        <position position="493"/>
    </location>
    <ligand>
        <name>heme</name>
        <dbReference type="ChEBI" id="CHEBI:30413"/>
    </ligand>
    <ligandPart>
        <name>Fe</name>
        <dbReference type="ChEBI" id="CHEBI:18248"/>
    </ligandPart>
</feature>
<feature type="glycosylation site" description="N-linked (GlcNAc...) asparagine" evidence="3">
    <location>
        <position position="258"/>
    </location>
</feature>
<reference key="1">
    <citation type="journal article" date="2012" name="PLoS Pathog.">
        <title>Comparative pathogenomics reveals horizontally acquired novel virulence genes in fungi infecting cereal hosts.</title>
        <authorList>
            <person name="Gardiner D.M."/>
            <person name="McDonald M.C."/>
            <person name="Covarelli L."/>
            <person name="Solomon P.S."/>
            <person name="Rusu A.G."/>
            <person name="Marshall M."/>
            <person name="Kazan K."/>
            <person name="Chakraborty S."/>
            <person name="McDonald B.A."/>
            <person name="Manners J.M."/>
        </authorList>
    </citation>
    <scope>NUCLEOTIDE SEQUENCE [LARGE SCALE GENOMIC DNA]</scope>
    <source>
        <strain>CS3096</strain>
    </source>
</reference>
<reference key="2">
    <citation type="journal article" date="2018" name="Mol. Plant Pathol.">
        <title>The cereal pathogen Fusarium pseudograminearum produces a new class of active cytokinins during infection.</title>
        <authorList>
            <person name="Soerensen J.L."/>
            <person name="Benfield A.H."/>
            <person name="Wollenberg R.D."/>
            <person name="Westphal K."/>
            <person name="Wimmer R."/>
            <person name="Nielsen M.R."/>
            <person name="Nielsen K.F."/>
            <person name="Carere J."/>
            <person name="Covarelli L."/>
            <person name="Beccari G."/>
            <person name="Powell J."/>
            <person name="Yamashino T."/>
            <person name="Kogler H."/>
            <person name="Sondergaard T.E."/>
            <person name="Gardiner D.M."/>
        </authorList>
    </citation>
    <scope>GENOME REANNOTATION</scope>
    <scope>FUNCTION</scope>
    <scope>DISRUPTION PHENOTYPE</scope>
    <scope>INDUCTION</scope>
    <scope>PATHWAY</scope>
    <source>
        <strain>CS3096</strain>
    </source>
</reference>
<keyword id="KW-0325">Glycoprotein</keyword>
<keyword id="KW-0349">Heme</keyword>
<keyword id="KW-0408">Iron</keyword>
<keyword id="KW-0472">Membrane</keyword>
<keyword id="KW-0479">Metal-binding</keyword>
<keyword id="KW-0503">Monooxygenase</keyword>
<keyword id="KW-0560">Oxidoreductase</keyword>
<keyword id="KW-1185">Reference proteome</keyword>
<keyword id="KW-0812">Transmembrane</keyword>
<keyword id="KW-1133">Transmembrane helix</keyword>
<proteinExistence type="evidence at transcript level"/>